<comment type="similarity">
    <text evidence="1">Belongs to the bacterial ribosomal protein bL36 family.</text>
</comment>
<sequence>MKVRPSVKKICDKCKVVRRRGVVRIICENPRHKQRQGN</sequence>
<feature type="chain" id="PRO_1000078486" description="Large ribosomal subunit protein bL36">
    <location>
        <begin position="1"/>
        <end position="38"/>
    </location>
</feature>
<protein>
    <recommendedName>
        <fullName evidence="1">Large ribosomal subunit protein bL36</fullName>
    </recommendedName>
    <alternativeName>
        <fullName evidence="2">50S ribosomal protein L36</fullName>
    </alternativeName>
</protein>
<evidence type="ECO:0000255" key="1">
    <source>
        <dbReference type="HAMAP-Rule" id="MF_00251"/>
    </source>
</evidence>
<evidence type="ECO:0000305" key="2"/>
<keyword id="KW-1185">Reference proteome</keyword>
<keyword id="KW-0687">Ribonucleoprotein</keyword>
<keyword id="KW-0689">Ribosomal protein</keyword>
<reference key="1">
    <citation type="journal article" date="2007" name="Nat. Biotechnol.">
        <title>Complete genome sequence of the myxobacterium Sorangium cellulosum.</title>
        <authorList>
            <person name="Schneiker S."/>
            <person name="Perlova O."/>
            <person name="Kaiser O."/>
            <person name="Gerth K."/>
            <person name="Alici A."/>
            <person name="Altmeyer M.O."/>
            <person name="Bartels D."/>
            <person name="Bekel T."/>
            <person name="Beyer S."/>
            <person name="Bode E."/>
            <person name="Bode H.B."/>
            <person name="Bolten C.J."/>
            <person name="Choudhuri J.V."/>
            <person name="Doss S."/>
            <person name="Elnakady Y.A."/>
            <person name="Frank B."/>
            <person name="Gaigalat L."/>
            <person name="Goesmann A."/>
            <person name="Groeger C."/>
            <person name="Gross F."/>
            <person name="Jelsbak L."/>
            <person name="Jelsbak L."/>
            <person name="Kalinowski J."/>
            <person name="Kegler C."/>
            <person name="Knauber T."/>
            <person name="Konietzny S."/>
            <person name="Kopp M."/>
            <person name="Krause L."/>
            <person name="Krug D."/>
            <person name="Linke B."/>
            <person name="Mahmud T."/>
            <person name="Martinez-Arias R."/>
            <person name="McHardy A.C."/>
            <person name="Merai M."/>
            <person name="Meyer F."/>
            <person name="Mormann S."/>
            <person name="Munoz-Dorado J."/>
            <person name="Perez J."/>
            <person name="Pradella S."/>
            <person name="Rachid S."/>
            <person name="Raddatz G."/>
            <person name="Rosenau F."/>
            <person name="Rueckert C."/>
            <person name="Sasse F."/>
            <person name="Scharfe M."/>
            <person name="Schuster S.C."/>
            <person name="Suen G."/>
            <person name="Treuner-Lange A."/>
            <person name="Velicer G.J."/>
            <person name="Vorholter F.-J."/>
            <person name="Weissman K.J."/>
            <person name="Welch R.D."/>
            <person name="Wenzel S.C."/>
            <person name="Whitworth D.E."/>
            <person name="Wilhelm S."/>
            <person name="Wittmann C."/>
            <person name="Bloecker H."/>
            <person name="Puehler A."/>
            <person name="Mueller R."/>
        </authorList>
    </citation>
    <scope>NUCLEOTIDE SEQUENCE [LARGE SCALE GENOMIC DNA]</scope>
    <source>
        <strain>So ce56</strain>
    </source>
</reference>
<organism>
    <name type="scientific">Sorangium cellulosum (strain So ce56)</name>
    <name type="common">Polyangium cellulosum (strain So ce56)</name>
    <dbReference type="NCBI Taxonomy" id="448385"/>
    <lineage>
        <taxon>Bacteria</taxon>
        <taxon>Pseudomonadati</taxon>
        <taxon>Myxococcota</taxon>
        <taxon>Polyangia</taxon>
        <taxon>Polyangiales</taxon>
        <taxon>Polyangiaceae</taxon>
        <taxon>Sorangium</taxon>
    </lineage>
</organism>
<proteinExistence type="inferred from homology"/>
<accession>A9FGD2</accession>
<name>RL36_SORC5</name>
<dbReference type="EMBL" id="AM746676">
    <property type="protein sequence ID" value="CAN98110.1"/>
    <property type="molecule type" value="Genomic_DNA"/>
</dbReference>
<dbReference type="RefSeq" id="WP_012240549.1">
    <property type="nucleotide sequence ID" value="NC_010162.1"/>
</dbReference>
<dbReference type="SMR" id="A9FGD2"/>
<dbReference type="STRING" id="448385.sce7940"/>
<dbReference type="KEGG" id="scl:sce7940"/>
<dbReference type="eggNOG" id="COG0257">
    <property type="taxonomic scope" value="Bacteria"/>
</dbReference>
<dbReference type="HOGENOM" id="CLU_135723_6_2_7"/>
<dbReference type="BioCyc" id="SCEL448385:SCE_RS40645-MONOMER"/>
<dbReference type="Proteomes" id="UP000002139">
    <property type="component" value="Chromosome"/>
</dbReference>
<dbReference type="GO" id="GO:0005737">
    <property type="term" value="C:cytoplasm"/>
    <property type="evidence" value="ECO:0007669"/>
    <property type="project" value="UniProtKB-ARBA"/>
</dbReference>
<dbReference type="GO" id="GO:1990904">
    <property type="term" value="C:ribonucleoprotein complex"/>
    <property type="evidence" value="ECO:0007669"/>
    <property type="project" value="UniProtKB-KW"/>
</dbReference>
<dbReference type="GO" id="GO:0005840">
    <property type="term" value="C:ribosome"/>
    <property type="evidence" value="ECO:0007669"/>
    <property type="project" value="UniProtKB-KW"/>
</dbReference>
<dbReference type="GO" id="GO:0003735">
    <property type="term" value="F:structural constituent of ribosome"/>
    <property type="evidence" value="ECO:0007669"/>
    <property type="project" value="InterPro"/>
</dbReference>
<dbReference type="GO" id="GO:0006412">
    <property type="term" value="P:translation"/>
    <property type="evidence" value="ECO:0007669"/>
    <property type="project" value="UniProtKB-UniRule"/>
</dbReference>
<dbReference type="HAMAP" id="MF_00251">
    <property type="entry name" value="Ribosomal_bL36"/>
    <property type="match status" value="1"/>
</dbReference>
<dbReference type="InterPro" id="IPR000473">
    <property type="entry name" value="Ribosomal_bL36"/>
</dbReference>
<dbReference type="InterPro" id="IPR035977">
    <property type="entry name" value="Ribosomal_bL36_sp"/>
</dbReference>
<dbReference type="NCBIfam" id="TIGR01022">
    <property type="entry name" value="rpmJ_bact"/>
    <property type="match status" value="1"/>
</dbReference>
<dbReference type="PANTHER" id="PTHR42888">
    <property type="entry name" value="50S RIBOSOMAL PROTEIN L36, CHLOROPLASTIC"/>
    <property type="match status" value="1"/>
</dbReference>
<dbReference type="PANTHER" id="PTHR42888:SF1">
    <property type="entry name" value="LARGE RIBOSOMAL SUBUNIT PROTEIN BL36C"/>
    <property type="match status" value="1"/>
</dbReference>
<dbReference type="Pfam" id="PF00444">
    <property type="entry name" value="Ribosomal_L36"/>
    <property type="match status" value="1"/>
</dbReference>
<dbReference type="SUPFAM" id="SSF57840">
    <property type="entry name" value="Ribosomal protein L36"/>
    <property type="match status" value="1"/>
</dbReference>
<dbReference type="PROSITE" id="PS00828">
    <property type="entry name" value="RIBOSOMAL_L36"/>
    <property type="match status" value="1"/>
</dbReference>
<gene>
    <name evidence="1" type="primary">rpmJ</name>
    <name type="ordered locus">sce7940</name>
</gene>